<reference key="1">
    <citation type="journal article" date="1994" name="J. Cell Biol.">
        <title>Recombinant Vgr-1/BMP-6-expressing tumors induce fibrosis and endochondral bone formation in vivo.</title>
        <authorList>
            <person name="Gitelman S.E."/>
            <person name="Kobrin M.S."/>
            <person name="Ye J.Q."/>
            <person name="Lopez A.R."/>
            <person name="Lee A."/>
            <person name="Derynck R."/>
        </authorList>
    </citation>
    <scope>NUCLEOTIDE SEQUENCE [MRNA]</scope>
    <source>
        <tissue>Embryo</tissue>
    </source>
</reference>
<reference key="2">
    <citation type="journal article" date="1997" name="Mamm. Genome">
        <title>Structure and sequence of the mouse Bmp6 gene.</title>
        <authorList>
            <person name="Gitelman S.E."/>
            <person name="Kobrin M.S."/>
            <person name="Lee A."/>
            <person name="Fet V."/>
            <person name="Lyons K."/>
            <person name="Hogan B.L.M."/>
            <person name="Derynck R."/>
        </authorList>
    </citation>
    <scope>NUCLEOTIDE SEQUENCE [GENOMIC DNA]</scope>
</reference>
<reference key="3">
    <citation type="journal article" date="2004" name="Genome Res.">
        <title>The status, quality, and expansion of the NIH full-length cDNA project: the Mammalian Gene Collection (MGC).</title>
        <authorList>
            <consortium name="The MGC Project Team"/>
        </authorList>
    </citation>
    <scope>NUCLEOTIDE SEQUENCE [LARGE SCALE MRNA]</scope>
    <source>
        <tissue>Brain</tissue>
    </source>
</reference>
<reference key="4">
    <citation type="journal article" date="1989" name="Proc. Natl. Acad. Sci. U.S.A.">
        <title>Vgr-1, a mammalian gene related to Xenopus Vg-1, is a member of the transforming growth factor beta gene superfamily.</title>
        <authorList>
            <person name="Lyons K."/>
            <person name="Graycar J.L."/>
            <person name="Lee A."/>
            <person name="Hashmi S."/>
            <person name="Lindquist P.B."/>
            <person name="Chen E.Y."/>
            <person name="Hogan B.L.M."/>
            <person name="Derynck R."/>
        </authorList>
    </citation>
    <scope>NUCLEOTIDE SEQUENCE [MRNA] OF 73-510</scope>
</reference>
<reference key="5">
    <citation type="journal article" date="1998" name="Dev. Genet.">
        <title>Mice lacking Bmp6 function.</title>
        <authorList>
            <person name="Solloway M.J."/>
            <person name="Dudley A.T."/>
            <person name="Bikoff E.K."/>
            <person name="Lyons K.M."/>
            <person name="Hogan B.L."/>
            <person name="Robertson E.J."/>
        </authorList>
    </citation>
    <scope>DISRUPTION PHENOTYPE</scope>
</reference>
<reference key="6">
    <citation type="journal article" date="2003" name="Dev. Biol.">
        <title>Identification of a secreted BMP antagonist, ectodin, integrating BMP, FGF, and SHH signals from the tooth enamel knot.</title>
        <authorList>
            <person name="Laurikkala J."/>
            <person name="Kassai Y."/>
            <person name="Pakkasjaervi L."/>
            <person name="Thesleff I."/>
            <person name="Itoh N."/>
        </authorList>
    </citation>
    <scope>INTERACTION WITH SOSTDC1</scope>
</reference>
<reference key="7">
    <citation type="journal article" date="2009" name="Nat. Genet.">
        <title>BMP6 is a key endogenous regulator of hepcidin expression and iron metabolism.</title>
        <authorList>
            <person name="Andriopoulos B. Jr."/>
            <person name="Corradini E."/>
            <person name="Xia Y."/>
            <person name="Faasse S.A."/>
            <person name="Chen S."/>
            <person name="Grgurevic L."/>
            <person name="Knutson M.D."/>
            <person name="Pietrangelo A."/>
            <person name="Vukicevic S."/>
            <person name="Lin H.Y."/>
            <person name="Babitt J.L."/>
        </authorList>
    </citation>
    <scope>FUNCTION</scope>
    <scope>DISRUPTION PHENOTYPE</scope>
    <scope>INTERACTION WITH HEMOJUVELIN/HJV</scope>
</reference>
<reference key="8">
    <citation type="journal article" date="2018" name="Blood">
        <title>Erythroferrone inhibits the induction of hepcidin by BMP6.</title>
        <authorList>
            <person name="Arezes J."/>
            <person name="Foy N."/>
            <person name="McHugh K."/>
            <person name="Sawant A."/>
            <person name="Quinkert D."/>
            <person name="Terraube V."/>
            <person name="Brinth A."/>
            <person name="Tam M."/>
            <person name="LaVallie E.R."/>
            <person name="Taylor S."/>
            <person name="Armitage A.E."/>
            <person name="Pasricha S.R."/>
            <person name="Cunningham O."/>
            <person name="Lambert M."/>
            <person name="Draper S.J."/>
            <person name="Jasuja R."/>
            <person name="Drakesmith H."/>
        </authorList>
    </citation>
    <scope>INTERACTION WITH ERFE AND BMP6</scope>
</reference>
<reference key="9">
    <citation type="journal article" date="2020" name="Blood">
        <title>Erythroferrone lowers hepcidin by sequestering BMP2/6 heterodimer from binding to the BMP type I receptor ALK3.</title>
        <authorList>
            <person name="Wang C.Y."/>
            <person name="Xu Y."/>
            <person name="Traeger L."/>
            <person name="Dogan D.Y."/>
            <person name="Xiao X."/>
            <person name="Steinbicker A.U."/>
            <person name="Babitt J.L."/>
        </authorList>
    </citation>
    <scope>FUNCTION</scope>
    <scope>INTERACTION WITH ERFE; ACVR1; BMPR1A AND HUMAN BMP2</scope>
</reference>
<reference key="10">
    <citation type="journal article" date="2020" name="Blood Cells Mol. Dis.">
        <title>Novel mutations in the bone morphogenetic protein 6 gene in patients with iron overload and non-homozygous genotype for the HFE p.Cys282Tyr mutation.</title>
        <authorList>
            <person name="Alvarenga A.M."/>
            <person name="da Silva N.K."/>
            <person name="Fonseca P.F.S."/>
            <person name="Oliveira T.G.M."/>
            <person name="da Silva Monteiro J.B."/>
            <person name="Cancado R.D."/>
            <person name="Naoum F.A."/>
            <person name="Dinardo C.L."/>
            <person name="Brissot P."/>
            <person name="Santos P.C.J.L."/>
        </authorList>
    </citation>
    <scope>DISRUPTION PHENOTYPE</scope>
</reference>
<organism>
    <name type="scientific">Mus musculus</name>
    <name type="common">Mouse</name>
    <dbReference type="NCBI Taxonomy" id="10090"/>
    <lineage>
        <taxon>Eukaryota</taxon>
        <taxon>Metazoa</taxon>
        <taxon>Chordata</taxon>
        <taxon>Craniata</taxon>
        <taxon>Vertebrata</taxon>
        <taxon>Euteleostomi</taxon>
        <taxon>Mammalia</taxon>
        <taxon>Eutheria</taxon>
        <taxon>Euarchontoglires</taxon>
        <taxon>Glires</taxon>
        <taxon>Rodentia</taxon>
        <taxon>Myomorpha</taxon>
        <taxon>Muroidea</taxon>
        <taxon>Muridae</taxon>
        <taxon>Murinae</taxon>
        <taxon>Mus</taxon>
        <taxon>Mus</taxon>
    </lineage>
</organism>
<feature type="signal peptide" evidence="3">
    <location>
        <begin position="1"/>
        <end position="20"/>
    </location>
</feature>
<feature type="propeptide" id="PRO_0000033872" evidence="3">
    <location>
        <begin position="21"/>
        <end position="371"/>
    </location>
</feature>
<feature type="chain" id="PRO_0000033873" description="Bone morphogenetic protein 6">
    <location>
        <begin position="372"/>
        <end position="510"/>
    </location>
</feature>
<feature type="region of interest" description="Disordered" evidence="4">
    <location>
        <begin position="87"/>
        <end position="129"/>
    </location>
</feature>
<feature type="region of interest" description="Disordered" evidence="4">
    <location>
        <begin position="143"/>
        <end position="199"/>
    </location>
</feature>
<feature type="region of interest" description="Disordered" evidence="4">
    <location>
        <begin position="370"/>
        <end position="402"/>
    </location>
</feature>
<feature type="compositionally biased region" description="Low complexity" evidence="4">
    <location>
        <begin position="106"/>
        <end position="116"/>
    </location>
</feature>
<feature type="compositionally biased region" description="Polar residues" evidence="4">
    <location>
        <begin position="390"/>
        <end position="401"/>
    </location>
</feature>
<feature type="glycosylation site" description="N-linked (GlcNAc...) asparagine" evidence="3">
    <location>
        <position position="238"/>
    </location>
</feature>
<feature type="glycosylation site" description="N-linked (GlcNAc...) asparagine" evidence="3">
    <location>
        <position position="266"/>
    </location>
</feature>
<feature type="glycosylation site" description="N-linked (GlcNAc...) asparagine" evidence="3">
    <location>
        <position position="383"/>
    </location>
</feature>
<feature type="glycosylation site" description="N-linked (GlcNAc...) asparagine" evidence="3">
    <location>
        <position position="401"/>
    </location>
</feature>
<feature type="glycosylation site" description="N-linked (GlcNAc...) asparagine" evidence="3">
    <location>
        <position position="451"/>
    </location>
</feature>
<feature type="disulfide bond" evidence="1">
    <location>
        <begin position="409"/>
        <end position="475"/>
    </location>
</feature>
<feature type="disulfide bond" evidence="1">
    <location>
        <begin position="438"/>
        <end position="507"/>
    </location>
</feature>
<feature type="disulfide bond" evidence="1">
    <location>
        <begin position="442"/>
        <end position="509"/>
    </location>
</feature>
<feature type="disulfide bond" description="Interchain" evidence="1">
    <location>
        <position position="474"/>
    </location>
</feature>
<feature type="sequence conflict" description="In Ref. 4." evidence="11" ref="4">
    <original>K</original>
    <variation>M</variation>
    <location>
        <position position="73"/>
    </location>
</feature>
<feature type="sequence conflict" description="In Ref. 4." evidence="11" ref="4">
    <original>E</original>
    <variation>K</variation>
    <location>
        <position position="75"/>
    </location>
</feature>
<feature type="sequence conflict" description="In Ref. 4; AAA40548." evidence="11" ref="4">
    <original>L</original>
    <variation>P</variation>
    <location>
        <position position="86"/>
    </location>
</feature>
<accession>P20722</accession>
<accession>B2RRV6</accession>
<sequence length="510" mass="56432">MPGLGRRAQWLCWWWGLLCSCGPPPLRPPLPVAAAAAGGQLLGAGGSPVRAEQPPPQSSSSGFLYRRLKTHEKREMQKEILSVLGLPHRPRPLHGLQQPQPPVLPPQQQQQQQQQQTAREEPPPGRLKSAPLFMLDLYNALSNDDEEDGASEGVGQEPGSHGGASSSQLRQPSPGAAHSLNRKSLLAPGPGGGASPLTSAQDSAFLNDADMVMSFVNLVEYDKEFSPHQRHHKEFKFNLSQIPEGEAVTAAEFRVYKDCVVGSFKNQTFLISIYQVLQEHQHRDSDLFLLDTRVVWASEEGWLEFDITATSNLWVVTPQHNMGLQLSVVTRDGLHVNPRAAGLVGRDGPYDKQPFMVAFFKVSEVHVRTTRSASSRRRQQSRNRSTQSQDVSRGSGSSDYNGSELKTACKKHELYVSFQDLGWQDWIIAPKGYAANYCDGECSFPLNAHMNATNHAIVQTLVHLMNPEYVPKPCCAPTKLNAISVLYFDDNSNVILKKYRNMVVRACGCH</sequence>
<gene>
    <name type="primary">Bmp6</name>
    <name type="synonym">Bmp-6</name>
    <name type="synonym">Vgr1</name>
</gene>
<dbReference type="EMBL" id="X80992">
    <property type="protein sequence ID" value="CAA56917.1"/>
    <property type="molecule type" value="mRNA"/>
</dbReference>
<dbReference type="EMBL" id="U73520">
    <property type="protein sequence ID" value="AAB18235.1"/>
    <property type="molecule type" value="Genomic_DNA"/>
</dbReference>
<dbReference type="EMBL" id="U73515">
    <property type="protein sequence ID" value="AAB18235.1"/>
    <property type="status" value="JOINED"/>
    <property type="molecule type" value="Genomic_DNA"/>
</dbReference>
<dbReference type="EMBL" id="U73516">
    <property type="protein sequence ID" value="AAB18235.1"/>
    <property type="status" value="JOINED"/>
    <property type="molecule type" value="Genomic_DNA"/>
</dbReference>
<dbReference type="EMBL" id="U73517">
    <property type="protein sequence ID" value="AAB18235.1"/>
    <property type="status" value="JOINED"/>
    <property type="molecule type" value="Genomic_DNA"/>
</dbReference>
<dbReference type="EMBL" id="U73518">
    <property type="protein sequence ID" value="AAB18235.1"/>
    <property type="status" value="JOINED"/>
    <property type="molecule type" value="Genomic_DNA"/>
</dbReference>
<dbReference type="EMBL" id="U73519">
    <property type="protein sequence ID" value="AAB18235.1"/>
    <property type="status" value="JOINED"/>
    <property type="molecule type" value="Genomic_DNA"/>
</dbReference>
<dbReference type="EMBL" id="BC138593">
    <property type="protein sequence ID" value="AAI38594.1"/>
    <property type="molecule type" value="mRNA"/>
</dbReference>
<dbReference type="EMBL" id="BC138595">
    <property type="protein sequence ID" value="AAI38596.1"/>
    <property type="molecule type" value="mRNA"/>
</dbReference>
<dbReference type="EMBL" id="J04566">
    <property type="protein sequence ID" value="AAA40548.1"/>
    <property type="molecule type" value="mRNA"/>
</dbReference>
<dbReference type="CCDS" id="CCDS26462.1"/>
<dbReference type="PIR" id="A54798">
    <property type="entry name" value="A54798"/>
</dbReference>
<dbReference type="RefSeq" id="NP_031582.1">
    <property type="nucleotide sequence ID" value="NM_007556.4"/>
</dbReference>
<dbReference type="SMR" id="P20722"/>
<dbReference type="BioGRID" id="198366">
    <property type="interactions" value="1"/>
</dbReference>
<dbReference type="CORUM" id="P20722"/>
<dbReference type="FunCoup" id="P20722">
    <property type="interactions" value="571"/>
</dbReference>
<dbReference type="STRING" id="10090.ENSMUSP00000126999"/>
<dbReference type="GlyCosmos" id="P20722">
    <property type="glycosylation" value="5 sites, No reported glycans"/>
</dbReference>
<dbReference type="GlyGen" id="P20722">
    <property type="glycosylation" value="5 sites, 2 N-linked glycans (3 sites)"/>
</dbReference>
<dbReference type="iPTMnet" id="P20722"/>
<dbReference type="PhosphoSitePlus" id="P20722"/>
<dbReference type="PaxDb" id="10090-ENSMUSP00000126999"/>
<dbReference type="ProteomicsDB" id="273558"/>
<dbReference type="Antibodypedia" id="3456">
    <property type="antibodies" value="468 antibodies from 37 providers"/>
</dbReference>
<dbReference type="DNASU" id="12161"/>
<dbReference type="Ensembl" id="ENSMUST00000171970.3">
    <property type="protein sequence ID" value="ENSMUSP00000126999.2"/>
    <property type="gene ID" value="ENSMUSG00000039004.7"/>
</dbReference>
<dbReference type="GeneID" id="12161"/>
<dbReference type="KEGG" id="mmu:12161"/>
<dbReference type="UCSC" id="uc007qdp.1">
    <property type="organism name" value="mouse"/>
</dbReference>
<dbReference type="AGR" id="MGI:88182"/>
<dbReference type="CTD" id="654"/>
<dbReference type="MGI" id="MGI:88182">
    <property type="gene designation" value="Bmp6"/>
</dbReference>
<dbReference type="VEuPathDB" id="HostDB:ENSMUSG00000039004"/>
<dbReference type="eggNOG" id="KOG3900">
    <property type="taxonomic scope" value="Eukaryota"/>
</dbReference>
<dbReference type="GeneTree" id="ENSGT00940000158768"/>
<dbReference type="HOGENOM" id="CLU_020515_4_1_1"/>
<dbReference type="InParanoid" id="P20722"/>
<dbReference type="OMA" id="ERQQPWP"/>
<dbReference type="OrthoDB" id="5987191at2759"/>
<dbReference type="PhylomeDB" id="P20722"/>
<dbReference type="TreeFam" id="TF316134"/>
<dbReference type="BioGRID-ORCS" id="12161">
    <property type="hits" value="2 hits in 77 CRISPR screens"/>
</dbReference>
<dbReference type="ChiTaRS" id="Bmp6">
    <property type="organism name" value="mouse"/>
</dbReference>
<dbReference type="PRO" id="PR:P20722"/>
<dbReference type="Proteomes" id="UP000000589">
    <property type="component" value="Chromosome 13"/>
</dbReference>
<dbReference type="RNAct" id="P20722">
    <property type="molecule type" value="protein"/>
</dbReference>
<dbReference type="Bgee" id="ENSMUSG00000039004">
    <property type="expression patterns" value="Expressed in choroid plexus of fourth ventricle and 251 other cell types or tissues"/>
</dbReference>
<dbReference type="ExpressionAtlas" id="P20722">
    <property type="expression patterns" value="baseline and differential"/>
</dbReference>
<dbReference type="GO" id="GO:0150005">
    <property type="term" value="C:enzyme activator complex"/>
    <property type="evidence" value="ECO:0007669"/>
    <property type="project" value="Ensembl"/>
</dbReference>
<dbReference type="GO" id="GO:0005615">
    <property type="term" value="C:extracellular space"/>
    <property type="evidence" value="ECO:0007005"/>
    <property type="project" value="BHF-UCL"/>
</dbReference>
<dbReference type="GO" id="GO:0031982">
    <property type="term" value="C:vesicle"/>
    <property type="evidence" value="ECO:0007669"/>
    <property type="project" value="Ensembl"/>
</dbReference>
<dbReference type="GO" id="GO:0070700">
    <property type="term" value="F:BMP receptor binding"/>
    <property type="evidence" value="ECO:0000266"/>
    <property type="project" value="MGI"/>
</dbReference>
<dbReference type="GO" id="GO:0005125">
    <property type="term" value="F:cytokine activity"/>
    <property type="evidence" value="ECO:0007669"/>
    <property type="project" value="UniProtKB-KW"/>
</dbReference>
<dbReference type="GO" id="GO:0008083">
    <property type="term" value="F:growth factor activity"/>
    <property type="evidence" value="ECO:0007669"/>
    <property type="project" value="UniProtKB-KW"/>
</dbReference>
<dbReference type="GO" id="GO:0046982">
    <property type="term" value="F:protein heterodimerization activity"/>
    <property type="evidence" value="ECO:0000266"/>
    <property type="project" value="MGI"/>
</dbReference>
<dbReference type="GO" id="GO:0030509">
    <property type="term" value="P:BMP signaling pathway"/>
    <property type="evidence" value="ECO:0000314"/>
    <property type="project" value="MGI"/>
</dbReference>
<dbReference type="GO" id="GO:0051216">
    <property type="term" value="P:cartilage development"/>
    <property type="evidence" value="ECO:0007669"/>
    <property type="project" value="UniProtKB-KW"/>
</dbReference>
<dbReference type="GO" id="GO:0071281">
    <property type="term" value="P:cellular response to iron ion"/>
    <property type="evidence" value="ECO:0000315"/>
    <property type="project" value="BHF-UCL"/>
</dbReference>
<dbReference type="GO" id="GO:0071260">
    <property type="term" value="P:cellular response to mechanical stimulus"/>
    <property type="evidence" value="ECO:0007669"/>
    <property type="project" value="Ensembl"/>
</dbReference>
<dbReference type="GO" id="GO:0001958">
    <property type="term" value="P:endochondral ossification"/>
    <property type="evidence" value="ECO:0000315"/>
    <property type="project" value="MGI"/>
</dbReference>
<dbReference type="GO" id="GO:0001654">
    <property type="term" value="P:eye development"/>
    <property type="evidence" value="ECO:0000316"/>
    <property type="project" value="UniProtKB"/>
</dbReference>
<dbReference type="GO" id="GO:0006955">
    <property type="term" value="P:immune response"/>
    <property type="evidence" value="ECO:0007669"/>
    <property type="project" value="Ensembl"/>
</dbReference>
<dbReference type="GO" id="GO:0006954">
    <property type="term" value="P:inflammatory response"/>
    <property type="evidence" value="ECO:0000270"/>
    <property type="project" value="UniProtKB"/>
</dbReference>
<dbReference type="GO" id="GO:0006879">
    <property type="term" value="P:intracellular iron ion homeostasis"/>
    <property type="evidence" value="ECO:0000315"/>
    <property type="project" value="BHF-UCL"/>
</dbReference>
<dbReference type="GO" id="GO:0001822">
    <property type="term" value="P:kidney development"/>
    <property type="evidence" value="ECO:0000316"/>
    <property type="project" value="UniProtKB"/>
</dbReference>
<dbReference type="GO" id="GO:0030539">
    <property type="term" value="P:male genitalia development"/>
    <property type="evidence" value="ECO:0000316"/>
    <property type="project" value="MGI"/>
</dbReference>
<dbReference type="GO" id="GO:0060586">
    <property type="term" value="P:multicellular organismal-level iron ion homeostasis"/>
    <property type="evidence" value="ECO:0000315"/>
    <property type="project" value="BHF-UCL"/>
</dbReference>
<dbReference type="GO" id="GO:1903392">
    <property type="term" value="P:negative regulation of adherens junction organization"/>
    <property type="evidence" value="ECO:0007669"/>
    <property type="project" value="Ensembl"/>
</dbReference>
<dbReference type="GO" id="GO:2000048">
    <property type="term" value="P:negative regulation of cell-cell adhesion mediated by cadherin"/>
    <property type="evidence" value="ECO:0007669"/>
    <property type="project" value="Ensembl"/>
</dbReference>
<dbReference type="GO" id="GO:0000122">
    <property type="term" value="P:negative regulation of transcription by RNA polymerase II"/>
    <property type="evidence" value="ECO:0000315"/>
    <property type="project" value="BHF-UCL"/>
</dbReference>
<dbReference type="GO" id="GO:0030182">
    <property type="term" value="P:neuron differentiation"/>
    <property type="evidence" value="ECO:0000315"/>
    <property type="project" value="MGI"/>
</dbReference>
<dbReference type="GO" id="GO:0001649">
    <property type="term" value="P:osteoblast differentiation"/>
    <property type="evidence" value="ECO:0000316"/>
    <property type="project" value="MGI"/>
</dbReference>
<dbReference type="GO" id="GO:0032349">
    <property type="term" value="P:positive regulation of aldosterone biosynthetic process"/>
    <property type="evidence" value="ECO:0007669"/>
    <property type="project" value="Ensembl"/>
</dbReference>
<dbReference type="GO" id="GO:2000860">
    <property type="term" value="P:positive regulation of aldosterone secretion"/>
    <property type="evidence" value="ECO:0007669"/>
    <property type="project" value="Ensembl"/>
</dbReference>
<dbReference type="GO" id="GO:0030501">
    <property type="term" value="P:positive regulation of bone mineralization"/>
    <property type="evidence" value="ECO:0007669"/>
    <property type="project" value="Ensembl"/>
</dbReference>
<dbReference type="GO" id="GO:0032332">
    <property type="term" value="P:positive regulation of chondrocyte differentiation"/>
    <property type="evidence" value="ECO:0007669"/>
    <property type="project" value="Ensembl"/>
</dbReference>
<dbReference type="GO" id="GO:0045603">
    <property type="term" value="P:positive regulation of endothelial cell differentiation"/>
    <property type="evidence" value="ECO:0000314"/>
    <property type="project" value="DFLAT"/>
</dbReference>
<dbReference type="GO" id="GO:0001938">
    <property type="term" value="P:positive regulation of endothelial cell proliferation"/>
    <property type="evidence" value="ECO:0000314"/>
    <property type="project" value="DFLAT"/>
</dbReference>
<dbReference type="GO" id="GO:0010628">
    <property type="term" value="P:positive regulation of gene expression"/>
    <property type="evidence" value="ECO:0007669"/>
    <property type="project" value="Ensembl"/>
</dbReference>
<dbReference type="GO" id="GO:0031666">
    <property type="term" value="P:positive regulation of lipopolysaccharide-mediated signaling pathway"/>
    <property type="evidence" value="ECO:0000315"/>
    <property type="project" value="BHF-UCL"/>
</dbReference>
<dbReference type="GO" id="GO:0045666">
    <property type="term" value="P:positive regulation of neuron differentiation"/>
    <property type="evidence" value="ECO:0000314"/>
    <property type="project" value="MGI"/>
</dbReference>
<dbReference type="GO" id="GO:0045669">
    <property type="term" value="P:positive regulation of osteoblast differentiation"/>
    <property type="evidence" value="ECO:0007669"/>
    <property type="project" value="Ensembl"/>
</dbReference>
<dbReference type="GO" id="GO:0060391">
    <property type="term" value="P:positive regulation of SMAD protein signal transduction"/>
    <property type="evidence" value="ECO:0000315"/>
    <property type="project" value="BHF-UCL"/>
</dbReference>
<dbReference type="GO" id="GO:0045944">
    <property type="term" value="P:positive regulation of transcription by RNA polymerase II"/>
    <property type="evidence" value="ECO:0000315"/>
    <property type="project" value="BHF-UCL"/>
</dbReference>
<dbReference type="GO" id="GO:0043117">
    <property type="term" value="P:positive regulation of vascular permeability"/>
    <property type="evidence" value="ECO:0007669"/>
    <property type="project" value="Ensembl"/>
</dbReference>
<dbReference type="GO" id="GO:0014823">
    <property type="term" value="P:response to activity"/>
    <property type="evidence" value="ECO:0007669"/>
    <property type="project" value="Ensembl"/>
</dbReference>
<dbReference type="GO" id="GO:0051384">
    <property type="term" value="P:response to glucocorticoid"/>
    <property type="evidence" value="ECO:0007669"/>
    <property type="project" value="Ensembl"/>
</dbReference>
<dbReference type="GO" id="GO:0032026">
    <property type="term" value="P:response to magnesium ion"/>
    <property type="evidence" value="ECO:0007669"/>
    <property type="project" value="Ensembl"/>
</dbReference>
<dbReference type="GO" id="GO:0032526">
    <property type="term" value="P:response to retinoic acid"/>
    <property type="evidence" value="ECO:0007669"/>
    <property type="project" value="Ensembl"/>
</dbReference>
<dbReference type="GO" id="GO:0003323">
    <property type="term" value="P:type B pancreatic cell development"/>
    <property type="evidence" value="ECO:0007669"/>
    <property type="project" value="Ensembl"/>
</dbReference>
<dbReference type="CDD" id="cd19396">
    <property type="entry name" value="TGF_beta_BMP6"/>
    <property type="match status" value="1"/>
</dbReference>
<dbReference type="FunFam" id="2.10.90.10:FF:000003">
    <property type="entry name" value="Bone morphogenetic protein 5"/>
    <property type="match status" value="1"/>
</dbReference>
<dbReference type="Gene3D" id="2.60.120.970">
    <property type="match status" value="1"/>
</dbReference>
<dbReference type="Gene3D" id="2.10.90.10">
    <property type="entry name" value="Cystine-knot cytokines"/>
    <property type="match status" value="1"/>
</dbReference>
<dbReference type="InterPro" id="IPR029034">
    <property type="entry name" value="Cystine-knot_cytokine"/>
</dbReference>
<dbReference type="InterPro" id="IPR001839">
    <property type="entry name" value="TGF-b_C"/>
</dbReference>
<dbReference type="InterPro" id="IPR001111">
    <property type="entry name" value="TGF-b_propeptide"/>
</dbReference>
<dbReference type="InterPro" id="IPR015615">
    <property type="entry name" value="TGF-beta-rel"/>
</dbReference>
<dbReference type="InterPro" id="IPR017948">
    <property type="entry name" value="TGFb_CS"/>
</dbReference>
<dbReference type="PANTHER" id="PTHR11848:SF137">
    <property type="entry name" value="BONE MORPHOGENETIC PROTEIN 6"/>
    <property type="match status" value="1"/>
</dbReference>
<dbReference type="PANTHER" id="PTHR11848">
    <property type="entry name" value="TGF-BETA FAMILY"/>
    <property type="match status" value="1"/>
</dbReference>
<dbReference type="Pfam" id="PF00019">
    <property type="entry name" value="TGF_beta"/>
    <property type="match status" value="1"/>
</dbReference>
<dbReference type="Pfam" id="PF00688">
    <property type="entry name" value="TGFb_propeptide"/>
    <property type="match status" value="1"/>
</dbReference>
<dbReference type="PRINTS" id="PR00669">
    <property type="entry name" value="INHIBINA"/>
</dbReference>
<dbReference type="SMART" id="SM00204">
    <property type="entry name" value="TGFB"/>
    <property type="match status" value="1"/>
</dbReference>
<dbReference type="SUPFAM" id="SSF57501">
    <property type="entry name" value="Cystine-knot cytokines"/>
    <property type="match status" value="1"/>
</dbReference>
<dbReference type="PROSITE" id="PS00250">
    <property type="entry name" value="TGF_BETA_1"/>
    <property type="match status" value="1"/>
</dbReference>
<dbReference type="PROSITE" id="PS51362">
    <property type="entry name" value="TGF_BETA_2"/>
    <property type="match status" value="1"/>
</dbReference>
<evidence type="ECO:0000250" key="1"/>
<evidence type="ECO:0000250" key="2">
    <source>
        <dbReference type="UniProtKB" id="P22004"/>
    </source>
</evidence>
<evidence type="ECO:0000255" key="3"/>
<evidence type="ECO:0000256" key="4">
    <source>
        <dbReference type="SAM" id="MobiDB-lite"/>
    </source>
</evidence>
<evidence type="ECO:0000269" key="5">
    <source>
    </source>
</evidence>
<evidence type="ECO:0000269" key="6">
    <source>
    </source>
</evidence>
<evidence type="ECO:0000269" key="7">
    <source>
    </source>
</evidence>
<evidence type="ECO:0000269" key="8">
    <source>
    </source>
</evidence>
<evidence type="ECO:0000269" key="9">
    <source>
    </source>
</evidence>
<evidence type="ECO:0000269" key="10">
    <source>
    </source>
</evidence>
<evidence type="ECO:0000305" key="11"/>
<proteinExistence type="evidence at protein level"/>
<comment type="function">
    <text evidence="2 6 8">Growth factor of the TGF-beta superfamily that plays essential roles in many developmental processes including cartilage and bone formation (By similarity). Also plays an important role in the regulation of HAMP/hepcidin expression and iron metabolism by acting as a ligand for hemojuvelin/HJV (PubMed:19252486). Also acts to promote expression of HAMP, potentially via the interaction with its receptor BMPR1A/ALK3 (PubMed:31800957). Initiates the canonical BMP signaling cascade by associating with type I receptor ACVR1 and type II receptor ACVR2B. In turn, ACVR1 propagates signal by phosphorylating SMAD1/5/8 that travel to the nucleus and act as activators and repressors of transcription of target. Can also signal through non-canonical pathway such as TAZ-Hippo signaling cascade to modulate VEGF signaling by regulating VEGFR2 expression (By similarity).</text>
</comment>
<comment type="subunit">
    <text evidence="2 5 6 7 8">Interacts with SOSTDC1 (PubMed:14623234). Interacts (when glycosylated) with type I receptor ACVR1; the interaction may induce HAMP expression (PubMed:31800957). Interacts with type II receptor ACVR2B (By similarity). Interacts with Hemojuvelin/HJV (PubMed:19252486). Interacts with ERFE; the interaction inhibits BMP-induced transcription of HAMP (PubMed:30097509, PubMed:31800957). Interacts with BMPR1A/ALK3 (PubMed:31800957). Forms heterodimers with BMP2 in vitro; the heterodimer then binds to its receptor BMPR1A /ALK3 and may induce HAMP expression (PubMed:31800957).</text>
</comment>
<comment type="subcellular location">
    <subcellularLocation>
        <location evidence="2">Secreted</location>
    </subcellularLocation>
</comment>
<comment type="tissue specificity">
    <text>Expressed in the lung. Low levels seen in the kidney.</text>
</comment>
<comment type="disruption phenotype">
    <text evidence="6 9 10">Deficient mice are viable and fertile without displaying overt effects in tissues known to express BMP6, suggesting a functional redundancy among the factors of this subgroup (PubMed:9664685). However, these mice show a significant increased liver iron content (PubMed:19252486, PubMed:32464486).</text>
</comment>
<comment type="similarity">
    <text evidence="11">Belongs to the TGF-beta family.</text>
</comment>
<protein>
    <recommendedName>
        <fullName>Bone morphogenetic protein 6</fullName>
        <shortName>BMP-6</shortName>
    </recommendedName>
    <alternativeName>
        <fullName>VG-1-related protein</fullName>
        <shortName>VGR-1</shortName>
    </alternativeName>
</protein>
<name>BMP6_MOUSE</name>
<keyword id="KW-0891">Chondrogenesis</keyword>
<keyword id="KW-0165">Cleavage on pair of basic residues</keyword>
<keyword id="KW-0202">Cytokine</keyword>
<keyword id="KW-0217">Developmental protein</keyword>
<keyword id="KW-0221">Differentiation</keyword>
<keyword id="KW-1015">Disulfide bond</keyword>
<keyword id="KW-0325">Glycoprotein</keyword>
<keyword id="KW-0339">Growth factor</keyword>
<keyword id="KW-0892">Osteogenesis</keyword>
<keyword id="KW-1185">Reference proteome</keyword>
<keyword id="KW-0964">Secreted</keyword>
<keyword id="KW-0732">Signal</keyword>